<keyword id="KW-0002">3D-structure</keyword>
<keyword id="KW-1185">Reference proteome</keyword>
<keyword id="KW-0687">Ribonucleoprotein</keyword>
<keyword id="KW-0689">Ribosomal protein</keyword>
<protein>
    <recommendedName>
        <fullName evidence="2">Large ribosomal subunit protein bL27</fullName>
    </recommendedName>
    <alternativeName>
        <fullName evidence="3">50S ribosomal protein L27</fullName>
    </alternativeName>
</protein>
<reference key="1">
    <citation type="journal article" date="1996" name="Nucleic Acids Res.">
        <title>Complete sequence analysis of the genome of the bacterium Mycoplasma pneumoniae.</title>
        <authorList>
            <person name="Himmelreich R."/>
            <person name="Hilbert H."/>
            <person name="Plagens H."/>
            <person name="Pirkl E."/>
            <person name="Li B.-C."/>
            <person name="Herrmann R."/>
        </authorList>
    </citation>
    <scope>NUCLEOTIDE SEQUENCE [LARGE SCALE GENOMIC DNA]</scope>
    <source>
        <strain>ATCC 29342 / M129 / Subtype 1</strain>
    </source>
</reference>
<dbReference type="EMBL" id="U00089">
    <property type="protein sequence ID" value="AAB96157.1"/>
    <property type="molecule type" value="Genomic_DNA"/>
</dbReference>
<dbReference type="PIR" id="S73835">
    <property type="entry name" value="S73835"/>
</dbReference>
<dbReference type="RefSeq" id="NP_110015.1">
    <property type="nucleotide sequence ID" value="NC_000912.1"/>
</dbReference>
<dbReference type="PDB" id="7OOD">
    <property type="method" value="EM"/>
    <property type="resolution" value="3.40 A"/>
    <property type="chains" value="u=1-104"/>
</dbReference>
<dbReference type="PDB" id="7P6Z">
    <property type="method" value="EM"/>
    <property type="resolution" value="3.50 A"/>
    <property type="chains" value="u=1-104"/>
</dbReference>
<dbReference type="PDB" id="7PAH">
    <property type="method" value="EM"/>
    <property type="resolution" value="9.50 A"/>
    <property type="chains" value="u=1-104"/>
</dbReference>
<dbReference type="PDB" id="7PAI">
    <property type="method" value="EM"/>
    <property type="resolution" value="6.70 A"/>
    <property type="chains" value="u=1-104"/>
</dbReference>
<dbReference type="PDB" id="7PAJ">
    <property type="method" value="EM"/>
    <property type="resolution" value="7.30 A"/>
    <property type="chains" value="u=1-104"/>
</dbReference>
<dbReference type="PDB" id="7PAK">
    <property type="method" value="EM"/>
    <property type="resolution" value="5.30 A"/>
    <property type="chains" value="u=1-104"/>
</dbReference>
<dbReference type="PDB" id="7PAL">
    <property type="method" value="EM"/>
    <property type="resolution" value="4.70 A"/>
    <property type="chains" value="u=1-104"/>
</dbReference>
<dbReference type="PDB" id="7PAM">
    <property type="method" value="EM"/>
    <property type="resolution" value="6.80 A"/>
    <property type="chains" value="u=1-104"/>
</dbReference>
<dbReference type="PDB" id="7PAN">
    <property type="method" value="EM"/>
    <property type="resolution" value="9.70 A"/>
    <property type="chains" value="u=1-104"/>
</dbReference>
<dbReference type="PDB" id="7PAO">
    <property type="method" value="EM"/>
    <property type="resolution" value="7.00 A"/>
    <property type="chains" value="u=1-104"/>
</dbReference>
<dbReference type="PDB" id="7PAQ">
    <property type="method" value="EM"/>
    <property type="resolution" value="8.90 A"/>
    <property type="chains" value="u=1-104"/>
</dbReference>
<dbReference type="PDB" id="7PAR">
    <property type="method" value="EM"/>
    <property type="resolution" value="8.20 A"/>
    <property type="chains" value="u=1-104"/>
</dbReference>
<dbReference type="PDB" id="7PAS">
    <property type="method" value="EM"/>
    <property type="resolution" value="16.00 A"/>
    <property type="chains" value="u=1-104"/>
</dbReference>
<dbReference type="PDB" id="7PAT">
    <property type="method" value="EM"/>
    <property type="resolution" value="9.20 A"/>
    <property type="chains" value="u=1-104"/>
</dbReference>
<dbReference type="PDB" id="7PAU">
    <property type="method" value="EM"/>
    <property type="resolution" value="8.30 A"/>
    <property type="chains" value="u=1-104"/>
</dbReference>
<dbReference type="PDB" id="7PH9">
    <property type="method" value="EM"/>
    <property type="resolution" value="8.70 A"/>
    <property type="chains" value="u=1-104"/>
</dbReference>
<dbReference type="PDB" id="7PHA">
    <property type="method" value="EM"/>
    <property type="resolution" value="8.50 A"/>
    <property type="chains" value="u=1-104"/>
</dbReference>
<dbReference type="PDB" id="7PHB">
    <property type="method" value="EM"/>
    <property type="resolution" value="4.90 A"/>
    <property type="chains" value="u=1-104"/>
</dbReference>
<dbReference type="PDB" id="7PHC">
    <property type="method" value="EM"/>
    <property type="resolution" value="9.90 A"/>
    <property type="chains" value="u=1-104"/>
</dbReference>
<dbReference type="PDB" id="7PI8">
    <property type="method" value="EM"/>
    <property type="resolution" value="8.90 A"/>
    <property type="chains" value="u=1-104"/>
</dbReference>
<dbReference type="PDB" id="7PI9">
    <property type="method" value="EM"/>
    <property type="resolution" value="6.30 A"/>
    <property type="chains" value="u=1-104"/>
</dbReference>
<dbReference type="PDB" id="7PIA">
    <property type="method" value="EM"/>
    <property type="resolution" value="13.60 A"/>
    <property type="chains" value="u=1-104"/>
</dbReference>
<dbReference type="PDB" id="7PIB">
    <property type="method" value="EM"/>
    <property type="resolution" value="4.70 A"/>
    <property type="chains" value="u=1-104"/>
</dbReference>
<dbReference type="PDB" id="7PIC">
    <property type="method" value="EM"/>
    <property type="resolution" value="9.10 A"/>
    <property type="chains" value="u=1-104"/>
</dbReference>
<dbReference type="PDB" id="7PIO">
    <property type="method" value="EM"/>
    <property type="resolution" value="9.50 A"/>
    <property type="chains" value="u=1-104"/>
</dbReference>
<dbReference type="PDB" id="7PIP">
    <property type="method" value="EM"/>
    <property type="resolution" value="9.30 A"/>
    <property type="chains" value="u=1-104"/>
</dbReference>
<dbReference type="PDB" id="7PIQ">
    <property type="method" value="EM"/>
    <property type="resolution" value="9.70 A"/>
    <property type="chains" value="u=1-104"/>
</dbReference>
<dbReference type="PDB" id="7PIR">
    <property type="method" value="EM"/>
    <property type="resolution" value="12.10 A"/>
    <property type="chains" value="u=1-104"/>
</dbReference>
<dbReference type="PDB" id="7PIS">
    <property type="method" value="EM"/>
    <property type="resolution" value="15.00 A"/>
    <property type="chains" value="u=1-104"/>
</dbReference>
<dbReference type="PDB" id="7PIT">
    <property type="method" value="EM"/>
    <property type="resolution" value="5.70 A"/>
    <property type="chains" value="u=1-104"/>
</dbReference>
<dbReference type="PDB" id="8P7X">
    <property type="method" value="EM"/>
    <property type="resolution" value="3.03 A"/>
    <property type="chains" value="u=1-104"/>
</dbReference>
<dbReference type="PDB" id="8P7Y">
    <property type="method" value="EM"/>
    <property type="resolution" value="3.70 A"/>
    <property type="chains" value="u=1-104"/>
</dbReference>
<dbReference type="PDB" id="8P8B">
    <property type="method" value="EM"/>
    <property type="resolution" value="2.90 A"/>
    <property type="chains" value="u=1-104"/>
</dbReference>
<dbReference type="PDB" id="8P8V">
    <property type="method" value="EM"/>
    <property type="resolution" value="8.70 A"/>
    <property type="chains" value="u=1-104"/>
</dbReference>
<dbReference type="PDB" id="8P8W">
    <property type="method" value="EM"/>
    <property type="resolution" value="8.70 A"/>
    <property type="chains" value="u=1-104"/>
</dbReference>
<dbReference type="PDBsum" id="7OOD"/>
<dbReference type="PDBsum" id="7P6Z"/>
<dbReference type="PDBsum" id="7PAH"/>
<dbReference type="PDBsum" id="7PAI"/>
<dbReference type="PDBsum" id="7PAJ"/>
<dbReference type="PDBsum" id="7PAK"/>
<dbReference type="PDBsum" id="7PAL"/>
<dbReference type="PDBsum" id="7PAM"/>
<dbReference type="PDBsum" id="7PAN"/>
<dbReference type="PDBsum" id="7PAO"/>
<dbReference type="PDBsum" id="7PAQ"/>
<dbReference type="PDBsum" id="7PAR"/>
<dbReference type="PDBsum" id="7PAS"/>
<dbReference type="PDBsum" id="7PAT"/>
<dbReference type="PDBsum" id="7PAU"/>
<dbReference type="PDBsum" id="7PH9"/>
<dbReference type="PDBsum" id="7PHA"/>
<dbReference type="PDBsum" id="7PHB"/>
<dbReference type="PDBsum" id="7PHC"/>
<dbReference type="PDBsum" id="7PI8"/>
<dbReference type="PDBsum" id="7PI9"/>
<dbReference type="PDBsum" id="7PIA"/>
<dbReference type="PDBsum" id="7PIB"/>
<dbReference type="PDBsum" id="7PIC"/>
<dbReference type="PDBsum" id="7PIO"/>
<dbReference type="PDBsum" id="7PIP"/>
<dbReference type="PDBsum" id="7PIQ"/>
<dbReference type="PDBsum" id="7PIR"/>
<dbReference type="PDBsum" id="7PIS"/>
<dbReference type="PDBsum" id="7PIT"/>
<dbReference type="PDBsum" id="8P7X"/>
<dbReference type="PDBsum" id="8P7Y"/>
<dbReference type="PDBsum" id="8P8B"/>
<dbReference type="PDBsum" id="8P8V"/>
<dbReference type="PDBsum" id="8P8W"/>
<dbReference type="EMDB" id="EMD-13234"/>
<dbReference type="EMDB" id="EMD-13272"/>
<dbReference type="EMDB" id="EMD-13273"/>
<dbReference type="EMDB" id="EMD-13274"/>
<dbReference type="EMDB" id="EMD-13275"/>
<dbReference type="EMDB" id="EMD-13276"/>
<dbReference type="EMDB" id="EMD-13277"/>
<dbReference type="EMDB" id="EMD-13278"/>
<dbReference type="EMDB" id="EMD-13279"/>
<dbReference type="EMDB" id="EMD-13280"/>
<dbReference type="EMDB" id="EMD-13281"/>
<dbReference type="EMDB" id="EMD-13282"/>
<dbReference type="EMDB" id="EMD-13285"/>
<dbReference type="EMDB" id="EMD-13286"/>
<dbReference type="EMDB" id="EMD-13410"/>
<dbReference type="EMDB" id="EMD-13411"/>
<dbReference type="EMDB" id="EMD-13412"/>
<dbReference type="EMDB" id="EMD-13413"/>
<dbReference type="EMDB" id="EMD-13432"/>
<dbReference type="EMDB" id="EMD-13433"/>
<dbReference type="EMDB" id="EMD-13434"/>
<dbReference type="EMDB" id="EMD-13435"/>
<dbReference type="EMDB" id="EMD-13436"/>
<dbReference type="EMDB" id="EMD-13445"/>
<dbReference type="EMDB" id="EMD-13446"/>
<dbReference type="EMDB" id="EMD-13447"/>
<dbReference type="EMDB" id="EMD-13448"/>
<dbReference type="EMDB" id="EMD-13449"/>
<dbReference type="EMDB" id="EMD-13450"/>
<dbReference type="SMR" id="P75458"/>
<dbReference type="IntAct" id="P75458">
    <property type="interactions" value="5"/>
</dbReference>
<dbReference type="STRING" id="272634.MPN_327"/>
<dbReference type="EnsemblBacteria" id="AAB96157">
    <property type="protein sequence ID" value="AAB96157"/>
    <property type="gene ID" value="MPN_327"/>
</dbReference>
<dbReference type="KEGG" id="mpn:MPN_327"/>
<dbReference type="PATRIC" id="fig|272634.6.peg.351"/>
<dbReference type="HOGENOM" id="CLU_095424_4_0_14"/>
<dbReference type="OrthoDB" id="9803474at2"/>
<dbReference type="BioCyc" id="MPNE272634:G1GJ3-519-MONOMER"/>
<dbReference type="Proteomes" id="UP000000808">
    <property type="component" value="Chromosome"/>
</dbReference>
<dbReference type="GO" id="GO:0022625">
    <property type="term" value="C:cytosolic large ribosomal subunit"/>
    <property type="evidence" value="ECO:0007669"/>
    <property type="project" value="TreeGrafter"/>
</dbReference>
<dbReference type="GO" id="GO:0003735">
    <property type="term" value="F:structural constituent of ribosome"/>
    <property type="evidence" value="ECO:0007669"/>
    <property type="project" value="InterPro"/>
</dbReference>
<dbReference type="GO" id="GO:0006412">
    <property type="term" value="P:translation"/>
    <property type="evidence" value="ECO:0007669"/>
    <property type="project" value="UniProtKB-UniRule"/>
</dbReference>
<dbReference type="FunFam" id="2.40.50.100:FF:000004">
    <property type="entry name" value="50S ribosomal protein L27"/>
    <property type="match status" value="1"/>
</dbReference>
<dbReference type="Gene3D" id="2.40.50.100">
    <property type="match status" value="1"/>
</dbReference>
<dbReference type="HAMAP" id="MF_00539">
    <property type="entry name" value="Ribosomal_bL27"/>
    <property type="match status" value="1"/>
</dbReference>
<dbReference type="InterPro" id="IPR001684">
    <property type="entry name" value="Ribosomal_bL27"/>
</dbReference>
<dbReference type="InterPro" id="IPR018261">
    <property type="entry name" value="Ribosomal_bL27_CS"/>
</dbReference>
<dbReference type="NCBIfam" id="TIGR00062">
    <property type="entry name" value="L27"/>
    <property type="match status" value="1"/>
</dbReference>
<dbReference type="PANTHER" id="PTHR15893:SF0">
    <property type="entry name" value="LARGE RIBOSOMAL SUBUNIT PROTEIN BL27M"/>
    <property type="match status" value="1"/>
</dbReference>
<dbReference type="PANTHER" id="PTHR15893">
    <property type="entry name" value="RIBOSOMAL PROTEIN L27"/>
    <property type="match status" value="1"/>
</dbReference>
<dbReference type="Pfam" id="PF01016">
    <property type="entry name" value="Ribosomal_L27"/>
    <property type="match status" value="1"/>
</dbReference>
<dbReference type="PRINTS" id="PR00063">
    <property type="entry name" value="RIBOSOMALL27"/>
</dbReference>
<dbReference type="SUPFAM" id="SSF110324">
    <property type="entry name" value="Ribosomal L27 protein-like"/>
    <property type="match status" value="1"/>
</dbReference>
<dbReference type="PROSITE" id="PS00831">
    <property type="entry name" value="RIBOSOMAL_L27"/>
    <property type="match status" value="1"/>
</dbReference>
<accession>P75458</accession>
<gene>
    <name evidence="2" type="primary">rpmA</name>
    <name type="ordered locus">MPN_327</name>
    <name type="ORF">MP509</name>
</gene>
<organism>
    <name type="scientific">Mycoplasma pneumoniae (strain ATCC 29342 / M129 / Subtype 1)</name>
    <name type="common">Mycoplasmoides pneumoniae</name>
    <dbReference type="NCBI Taxonomy" id="272634"/>
    <lineage>
        <taxon>Bacteria</taxon>
        <taxon>Bacillati</taxon>
        <taxon>Mycoplasmatota</taxon>
        <taxon>Mycoplasmoidales</taxon>
        <taxon>Mycoplasmoidaceae</taxon>
        <taxon>Mycoplasmoides</taxon>
    </lineage>
</organism>
<name>RL27_MYCPN</name>
<evidence type="ECO:0000250" key="1">
    <source>
        <dbReference type="UniProtKB" id="Q2FXT0"/>
    </source>
</evidence>
<evidence type="ECO:0000255" key="2">
    <source>
        <dbReference type="HAMAP-Rule" id="MF_00539"/>
    </source>
</evidence>
<evidence type="ECO:0000305" key="3"/>
<evidence type="ECO:0007829" key="4">
    <source>
        <dbReference type="PDB" id="7OOD"/>
    </source>
</evidence>
<evidence type="ECO:0007829" key="5">
    <source>
        <dbReference type="PDB" id="8P8B"/>
    </source>
</evidence>
<sequence length="104" mass="11504">MNNKYFLTKIDLQFFASKKGVGSTKNGRDSHAKRLGAKKADGQMIRTGQIIYRQRGTRVYPGVNVGLGSDDTLFALSDGLVKYQKFGPKQGKTRVSVVKHKLDA</sequence>
<comment type="PTM">
    <text evidence="1">The N-terminus is cleaved by ribosomal processing cysteine protease Prp.</text>
</comment>
<comment type="similarity">
    <text evidence="2">Belongs to the bacterial ribosomal protein bL27 family.</text>
</comment>
<proteinExistence type="evidence at protein level"/>
<feature type="propeptide" id="PRO_0000459920" evidence="1">
    <location>
        <begin position="1"/>
        <end position="15"/>
    </location>
</feature>
<feature type="chain" id="PRO_0000181128" description="Large ribosomal subunit protein bL27">
    <location>
        <begin position="16"/>
        <end position="104"/>
    </location>
</feature>
<feature type="strand" evidence="4">
    <location>
        <begin position="36"/>
        <end position="39"/>
    </location>
</feature>
<feature type="strand" evidence="5">
    <location>
        <begin position="50"/>
        <end position="53"/>
    </location>
</feature>
<feature type="strand" evidence="5">
    <location>
        <begin position="58"/>
        <end position="61"/>
    </location>
</feature>
<feature type="strand" evidence="4">
    <location>
        <begin position="63"/>
        <end position="68"/>
    </location>
</feature>
<feature type="turn" evidence="4">
    <location>
        <begin position="69"/>
        <end position="71"/>
    </location>
</feature>
<feature type="strand" evidence="5">
    <location>
        <begin position="73"/>
        <end position="87"/>
    </location>
</feature>
<feature type="helix" evidence="5">
    <location>
        <begin position="88"/>
        <end position="90"/>
    </location>
</feature>
<feature type="strand" evidence="5">
    <location>
        <begin position="92"/>
        <end position="98"/>
    </location>
</feature>